<gene>
    <name type="primary">MBB1</name>
</gene>
<feature type="transit peptide" description="Chloroplast" evidence="1">
    <location>
        <begin position="1"/>
        <end position="50"/>
    </location>
</feature>
<feature type="chain" id="PRO_0000035683" description="PsbB mRNA maturation factor Mbb1, chloroplastic">
    <location>
        <begin position="51"/>
        <end position="662"/>
    </location>
</feature>
<feature type="repeat" description="TPR 1">
    <location>
        <begin position="126"/>
        <end position="160"/>
    </location>
</feature>
<feature type="repeat" description="TPR 2">
    <location>
        <begin position="161"/>
        <end position="194"/>
    </location>
</feature>
<feature type="repeat" description="TPR 3">
    <location>
        <begin position="196"/>
        <end position="229"/>
    </location>
</feature>
<feature type="repeat" description="TPR 4">
    <location>
        <begin position="231"/>
        <end position="263"/>
    </location>
</feature>
<feature type="repeat" description="TPR 5">
    <location>
        <begin position="269"/>
        <end position="302"/>
    </location>
</feature>
<feature type="repeat" description="TPR 6">
    <location>
        <begin position="305"/>
        <end position="338"/>
    </location>
</feature>
<feature type="repeat" description="TPR 7">
    <location>
        <begin position="339"/>
        <end position="372"/>
    </location>
</feature>
<feature type="repeat" description="TPR 8">
    <location>
        <begin position="373"/>
        <end position="406"/>
    </location>
</feature>
<feature type="repeat" description="TPR 9">
    <location>
        <begin position="408"/>
        <end position="440"/>
    </location>
</feature>
<feature type="repeat" description="TPR 10">
    <location>
        <begin position="444"/>
        <end position="477"/>
    </location>
</feature>
<feature type="region of interest" description="Disordered" evidence="2">
    <location>
        <begin position="14"/>
        <end position="38"/>
    </location>
</feature>
<feature type="region of interest" description="Disordered" evidence="2">
    <location>
        <begin position="75"/>
        <end position="101"/>
    </location>
</feature>
<feature type="region of interest" description="Disordered" evidence="2">
    <location>
        <begin position="540"/>
        <end position="563"/>
    </location>
</feature>
<feature type="region of interest" description="Disordered" evidence="2">
    <location>
        <begin position="598"/>
        <end position="662"/>
    </location>
</feature>
<feature type="compositionally biased region" description="Low complexity" evidence="2">
    <location>
        <begin position="23"/>
        <end position="32"/>
    </location>
</feature>
<feature type="compositionally biased region" description="Basic and acidic residues" evidence="2">
    <location>
        <begin position="88"/>
        <end position="101"/>
    </location>
</feature>
<reference key="1">
    <citation type="journal article" date="2000" name="Proc. Natl. Acad. Sci. U.S.A.">
        <title>Characterization of Mbb1, a nucleus-encoded tetratricopeptide-like repeat protein required for expression of the chloroplast psbB/ psbT /psbH gene cluster in Chlamydomonas reinhardtii.</title>
        <authorList>
            <person name="Vaistij F.E."/>
            <person name="Boudreau E."/>
            <person name="Lemaire S.D."/>
            <person name="Goldschmidt-Clermont M."/>
            <person name="Rochaix J.-D."/>
        </authorList>
    </citation>
    <scope>NUCLEOTIDE SEQUENCE [MRNA]</scope>
    <source>
        <strain>137c / CC-125</strain>
    </source>
</reference>
<comment type="function">
    <text>Involved, directly or indirectly, in the processing of the chloroplast encoded psbB mRNA to its mature form, acting via the 5'-UTR of the psbB mRNA.</text>
</comment>
<comment type="subunit">
    <text>Part of a 300 kDa complex that associates with RNA.</text>
</comment>
<comment type="subcellular location">
    <subcellularLocation>
        <location>Plastid</location>
        <location>Chloroplast stroma</location>
    </subcellularLocation>
</comment>
<dbReference type="EMBL" id="AJ296291">
    <property type="protein sequence ID" value="CAC19558.1"/>
    <property type="molecule type" value="mRNA"/>
</dbReference>
<dbReference type="RefSeq" id="XP_001696751.1">
    <property type="nucleotide sequence ID" value="XM_001696699.1"/>
</dbReference>
<dbReference type="SMR" id="Q9FNS4"/>
<dbReference type="PaxDb" id="3055-EDP00859"/>
<dbReference type="EnsemblPlants" id="PNW79465">
    <property type="protein sequence ID" value="PNW79465"/>
    <property type="gene ID" value="CHLRE_09g416200v5"/>
</dbReference>
<dbReference type="Gramene" id="PNW79465">
    <property type="protein sequence ID" value="PNW79465"/>
    <property type="gene ID" value="CHLRE_09g416200v5"/>
</dbReference>
<dbReference type="eggNOG" id="KOG1124">
    <property type="taxonomic scope" value="Eukaryota"/>
</dbReference>
<dbReference type="HOGENOM" id="CLU_414691_0_0_1"/>
<dbReference type="OMA" id="THACAWH"/>
<dbReference type="OrthoDB" id="541719at2759"/>
<dbReference type="GO" id="GO:0009570">
    <property type="term" value="C:chloroplast stroma"/>
    <property type="evidence" value="ECO:0007669"/>
    <property type="project" value="UniProtKB-SubCell"/>
</dbReference>
<dbReference type="GO" id="GO:0003729">
    <property type="term" value="F:mRNA binding"/>
    <property type="evidence" value="ECO:0007669"/>
    <property type="project" value="InterPro"/>
</dbReference>
<dbReference type="GO" id="GO:0006397">
    <property type="term" value="P:mRNA processing"/>
    <property type="evidence" value="ECO:0007669"/>
    <property type="project" value="UniProtKB-KW"/>
</dbReference>
<dbReference type="Gene3D" id="1.25.40.10">
    <property type="entry name" value="Tetratricopeptide repeat domain"/>
    <property type="match status" value="2"/>
</dbReference>
<dbReference type="InterPro" id="IPR003107">
    <property type="entry name" value="HAT"/>
</dbReference>
<dbReference type="InterPro" id="IPR044624">
    <property type="entry name" value="Mbb1-like"/>
</dbReference>
<dbReference type="InterPro" id="IPR011990">
    <property type="entry name" value="TPR-like_helical_dom_sf"/>
</dbReference>
<dbReference type="InterPro" id="IPR019734">
    <property type="entry name" value="TPR_rpt"/>
</dbReference>
<dbReference type="PANTHER" id="PTHR44917">
    <property type="entry name" value="PROTEIN HIGH CHLOROPHYLL FLUORESCENT 107"/>
    <property type="match status" value="1"/>
</dbReference>
<dbReference type="PANTHER" id="PTHR44917:SF1">
    <property type="entry name" value="PROTEIN HIGH CHLOROPHYLL FLUORESCENT 107"/>
    <property type="match status" value="1"/>
</dbReference>
<dbReference type="Pfam" id="PF13432">
    <property type="entry name" value="TPR_16"/>
    <property type="match status" value="1"/>
</dbReference>
<dbReference type="Pfam" id="PF14559">
    <property type="entry name" value="TPR_19"/>
    <property type="match status" value="1"/>
</dbReference>
<dbReference type="SMART" id="SM00386">
    <property type="entry name" value="HAT"/>
    <property type="match status" value="9"/>
</dbReference>
<dbReference type="SMART" id="SM00028">
    <property type="entry name" value="TPR"/>
    <property type="match status" value="7"/>
</dbReference>
<dbReference type="SUPFAM" id="SSF48452">
    <property type="entry name" value="TPR-like"/>
    <property type="match status" value="2"/>
</dbReference>
<dbReference type="PROSITE" id="PS50005">
    <property type="entry name" value="TPR"/>
    <property type="match status" value="6"/>
</dbReference>
<dbReference type="PROSITE" id="PS50293">
    <property type="entry name" value="TPR_REGION"/>
    <property type="match status" value="1"/>
</dbReference>
<name>MBB1_CHLRE</name>
<sequence>MSLVPFSQLWRGVRTRGPVEQASSSSSSSSSSRRTWYAPARSQTGVQVAAYEPTAVLQLAPSAVSRRSTPVRSSIIADLSSSGSGDGEGERGDATGSRDEASSAFAGSSKVLKINIDLLLWRCRTSRIRARQTLDLNERKSLYKAAEDGLRRCLALDPADPRAYVVLGKTLVQQKRYDEARQLYQDGCANTGNVNPYIWSAWGWLEARTGNVERARKLYDAAVVVDGTHACAWHKWGMLEKGQGNFTRARDLWMQGIQRCRRKPQSQNAYLYNALGCMAAQLGRVGEARSWFEEGTRSAEGAASVALWQAWAVLEAKQGDPTVVRYLFRKALGANPRSRYVHLAWALWERRQGNPQHCLALLRRGCELNPTDPALYQAWALVEKQAGRIERARELFEQGLRADPSDLYMWQAYGVMEAEQGNMDRARQLFQEGVWADPRSPSTVYVFHAWGALEWQAGNVQTARELFKAAVRVDPKSETTWASWIAMESELGEIERVDELRIRQAERQWEFVVPAGFTTRPAPGLVDTLARFFSARGFGSDGNGSSSSNGGAGGQQAGSEAAAGIRAADSVDLTVDGGGQLRFKDVERLVESNDLSALPDFLSSDDDVEASLRPPGAAGRRQQQPAGSGTGGDNINGSAGYGKLQVPSLVPRPKATPLRSMG</sequence>
<keyword id="KW-0150">Chloroplast</keyword>
<keyword id="KW-0507">mRNA processing</keyword>
<keyword id="KW-0934">Plastid</keyword>
<keyword id="KW-0677">Repeat</keyword>
<keyword id="KW-0802">TPR repeat</keyword>
<keyword id="KW-0809">Transit peptide</keyword>
<evidence type="ECO:0000255" key="1"/>
<evidence type="ECO:0000256" key="2">
    <source>
        <dbReference type="SAM" id="MobiDB-lite"/>
    </source>
</evidence>
<protein>
    <recommendedName>
        <fullName>PsbB mRNA maturation factor Mbb1, chloroplastic</fullName>
    </recommendedName>
</protein>
<proteinExistence type="evidence at transcript level"/>
<organism>
    <name type="scientific">Chlamydomonas reinhardtii</name>
    <name type="common">Chlamydomonas smithii</name>
    <dbReference type="NCBI Taxonomy" id="3055"/>
    <lineage>
        <taxon>Eukaryota</taxon>
        <taxon>Viridiplantae</taxon>
        <taxon>Chlorophyta</taxon>
        <taxon>core chlorophytes</taxon>
        <taxon>Chlorophyceae</taxon>
        <taxon>CS clade</taxon>
        <taxon>Chlamydomonadales</taxon>
        <taxon>Chlamydomonadaceae</taxon>
        <taxon>Chlamydomonas</taxon>
    </lineage>
</organism>
<accession>Q9FNS4</accession>